<comment type="function">
    <text evidence="1">Catalyzes the reductive methylation of 2'-deoxyuridine-5'-monophosphate (dUMP) to 2'-deoxythymidine-5'-monophosphate (dTMP) while utilizing 5,10-methylenetetrahydrofolate (mTHF) as the methyl donor, and NADPH and FADH(2) as the reductant.</text>
</comment>
<comment type="catalytic activity">
    <reaction evidence="1">
        <text>dUMP + (6R)-5,10-methylene-5,6,7,8-tetrahydrofolate + NADPH + H(+) = dTMP + (6S)-5,6,7,8-tetrahydrofolate + NADP(+)</text>
        <dbReference type="Rhea" id="RHEA:29043"/>
        <dbReference type="ChEBI" id="CHEBI:15378"/>
        <dbReference type="ChEBI" id="CHEBI:15636"/>
        <dbReference type="ChEBI" id="CHEBI:57453"/>
        <dbReference type="ChEBI" id="CHEBI:57783"/>
        <dbReference type="ChEBI" id="CHEBI:58349"/>
        <dbReference type="ChEBI" id="CHEBI:63528"/>
        <dbReference type="ChEBI" id="CHEBI:246422"/>
        <dbReference type="EC" id="2.1.1.148"/>
    </reaction>
</comment>
<comment type="cofactor">
    <cofactor evidence="1">
        <name>FAD</name>
        <dbReference type="ChEBI" id="CHEBI:57692"/>
    </cofactor>
    <text evidence="1">Binds 4 FAD per tetramer. Each FAD binding site is formed by three monomers.</text>
</comment>
<comment type="pathway">
    <text evidence="1">Pyrimidine metabolism; dTTP biosynthesis.</text>
</comment>
<comment type="subunit">
    <text evidence="1">Homotetramer.</text>
</comment>
<comment type="similarity">
    <text evidence="1">Belongs to the thymidylate synthase ThyX family.</text>
</comment>
<gene>
    <name evidence="1" type="primary">thyX</name>
    <name type="ordered locus">Mkms_2161</name>
</gene>
<evidence type="ECO:0000255" key="1">
    <source>
        <dbReference type="HAMAP-Rule" id="MF_01408"/>
    </source>
</evidence>
<evidence type="ECO:0000255" key="2">
    <source>
        <dbReference type="PROSITE-ProRule" id="PRU00661"/>
    </source>
</evidence>
<keyword id="KW-0274">FAD</keyword>
<keyword id="KW-0285">Flavoprotein</keyword>
<keyword id="KW-0489">Methyltransferase</keyword>
<keyword id="KW-0521">NADP</keyword>
<keyword id="KW-0545">Nucleotide biosynthesis</keyword>
<keyword id="KW-0808">Transferase</keyword>
<protein>
    <recommendedName>
        <fullName evidence="1">Flavin-dependent thymidylate synthase</fullName>
        <shortName evidence="1">FDTS</shortName>
        <ecNumber evidence="1">2.1.1.148</ecNumber>
    </recommendedName>
    <alternativeName>
        <fullName evidence="1">FAD-dependent thymidylate synthase</fullName>
    </alternativeName>
    <alternativeName>
        <fullName evidence="1">Thymidylate synthase ThyX</fullName>
        <shortName evidence="1">TS</shortName>
        <shortName evidence="1">TSase</shortName>
    </alternativeName>
</protein>
<feature type="chain" id="PRO_1000184597" description="Flavin-dependent thymidylate synthase">
    <location>
        <begin position="1"/>
        <end position="254"/>
    </location>
</feature>
<feature type="domain" description="ThyX" evidence="2">
    <location>
        <begin position="7"/>
        <end position="237"/>
    </location>
</feature>
<feature type="short sequence motif" description="ThyX motif" evidence="1">
    <location>
        <begin position="95"/>
        <end position="105"/>
    </location>
</feature>
<feature type="active site" description="Involved in ionization of N3 of dUMP, leading to its activation" evidence="1">
    <location>
        <position position="203"/>
    </location>
</feature>
<feature type="binding site" evidence="1">
    <location>
        <position position="71"/>
    </location>
    <ligand>
        <name>FAD</name>
        <dbReference type="ChEBI" id="CHEBI:57692"/>
        <note>ligand shared between neighboring subunits</note>
    </ligand>
</feature>
<feature type="binding site" evidence="1">
    <location>
        <begin position="92"/>
        <end position="95"/>
    </location>
    <ligand>
        <name>dUMP</name>
        <dbReference type="ChEBI" id="CHEBI:246422"/>
        <note>ligand shared between dimeric partners</note>
    </ligand>
</feature>
<feature type="binding site" evidence="1">
    <location>
        <begin position="95"/>
        <end position="97"/>
    </location>
    <ligand>
        <name>FAD</name>
        <dbReference type="ChEBI" id="CHEBI:57692"/>
        <note>ligand shared between neighboring subunits</note>
    </ligand>
</feature>
<feature type="binding site" description="in other chain" evidence="1">
    <location>
        <begin position="103"/>
        <end position="107"/>
    </location>
    <ligand>
        <name>dUMP</name>
        <dbReference type="ChEBI" id="CHEBI:246422"/>
        <note>ligand shared between dimeric partners</note>
    </ligand>
</feature>
<feature type="binding site" evidence="1">
    <location>
        <position position="103"/>
    </location>
    <ligand>
        <name>FAD</name>
        <dbReference type="ChEBI" id="CHEBI:57692"/>
        <note>ligand shared between neighboring subunits</note>
    </ligand>
</feature>
<feature type="binding site" description="in other chain" evidence="1">
    <location>
        <position position="176"/>
    </location>
    <ligand>
        <name>dUMP</name>
        <dbReference type="ChEBI" id="CHEBI:246422"/>
        <note>ligand shared between dimeric partners</note>
    </ligand>
</feature>
<feature type="binding site" evidence="1">
    <location>
        <begin position="192"/>
        <end position="194"/>
    </location>
    <ligand>
        <name>FAD</name>
        <dbReference type="ChEBI" id="CHEBI:57692"/>
        <note>ligand shared between neighboring subunits</note>
    </ligand>
</feature>
<feature type="binding site" evidence="1">
    <location>
        <position position="198"/>
    </location>
    <ligand>
        <name>FAD</name>
        <dbReference type="ChEBI" id="CHEBI:57692"/>
        <note>ligand shared between neighboring subunits</note>
    </ligand>
</feature>
<feature type="binding site" evidence="1">
    <location>
        <position position="203"/>
    </location>
    <ligand>
        <name>dUMP</name>
        <dbReference type="ChEBI" id="CHEBI:246422"/>
        <note>ligand shared between dimeric partners</note>
    </ligand>
</feature>
<sequence length="254" mass="27996">MAETAPLRVQLIARTEFTVPPDVPWETDAEGGAALVEFAGRACYQSWSKPNPRTATNASYLRHIIDVGHLSVLEHASVSFYITGISRSCTHELIRHRHFSYSQLSQRYVPENDSQVVVPPGIEGDAELEGLFTAAADASRAAYAELLAKLEAKLMGDEPREGRATLRRKQARQAARSVLPNATETRIVVTGNYRAWRHFIAMRASEHADLEIRRLAIACLRELVAVAPAVFADFEIYPLADGTEVATTPLVTEA</sequence>
<dbReference type="EC" id="2.1.1.148" evidence="1"/>
<dbReference type="EMBL" id="CP000518">
    <property type="protein sequence ID" value="ABL91359.1"/>
    <property type="molecule type" value="Genomic_DNA"/>
</dbReference>
<dbReference type="SMR" id="A1UEV1"/>
<dbReference type="STRING" id="189918.Mkms_2161"/>
<dbReference type="KEGG" id="mkm:Mkms_2161"/>
<dbReference type="HOGENOM" id="CLU_077585_1_0_11"/>
<dbReference type="OrthoDB" id="9780625at2"/>
<dbReference type="UniPathway" id="UPA00575"/>
<dbReference type="GO" id="GO:0050660">
    <property type="term" value="F:flavin adenine dinucleotide binding"/>
    <property type="evidence" value="ECO:0007669"/>
    <property type="project" value="InterPro"/>
</dbReference>
<dbReference type="GO" id="GO:0070402">
    <property type="term" value="F:NADPH binding"/>
    <property type="evidence" value="ECO:0007669"/>
    <property type="project" value="TreeGrafter"/>
</dbReference>
<dbReference type="GO" id="GO:0050797">
    <property type="term" value="F:thymidylate synthase (FAD) activity"/>
    <property type="evidence" value="ECO:0007669"/>
    <property type="project" value="UniProtKB-UniRule"/>
</dbReference>
<dbReference type="GO" id="GO:0004799">
    <property type="term" value="F:thymidylate synthase activity"/>
    <property type="evidence" value="ECO:0007669"/>
    <property type="project" value="TreeGrafter"/>
</dbReference>
<dbReference type="GO" id="GO:0006231">
    <property type="term" value="P:dTMP biosynthetic process"/>
    <property type="evidence" value="ECO:0007669"/>
    <property type="project" value="UniProtKB-UniRule"/>
</dbReference>
<dbReference type="GO" id="GO:0006235">
    <property type="term" value="P:dTTP biosynthetic process"/>
    <property type="evidence" value="ECO:0007669"/>
    <property type="project" value="UniProtKB-UniRule"/>
</dbReference>
<dbReference type="GO" id="GO:0032259">
    <property type="term" value="P:methylation"/>
    <property type="evidence" value="ECO:0007669"/>
    <property type="project" value="UniProtKB-KW"/>
</dbReference>
<dbReference type="CDD" id="cd20175">
    <property type="entry name" value="ThyX"/>
    <property type="match status" value="1"/>
</dbReference>
<dbReference type="Gene3D" id="3.30.70.3180">
    <property type="match status" value="2"/>
</dbReference>
<dbReference type="Gene3D" id="6.10.140.450">
    <property type="match status" value="1"/>
</dbReference>
<dbReference type="HAMAP" id="MF_01408">
    <property type="entry name" value="ThyX"/>
    <property type="match status" value="1"/>
</dbReference>
<dbReference type="InterPro" id="IPR003669">
    <property type="entry name" value="Thymidylate_synthase_ThyX"/>
</dbReference>
<dbReference type="InterPro" id="IPR036098">
    <property type="entry name" value="Thymidylate_synthase_ThyX_sf"/>
</dbReference>
<dbReference type="NCBIfam" id="TIGR02170">
    <property type="entry name" value="thyX"/>
    <property type="match status" value="1"/>
</dbReference>
<dbReference type="PANTHER" id="PTHR34934">
    <property type="entry name" value="FLAVIN-DEPENDENT THYMIDYLATE SYNTHASE"/>
    <property type="match status" value="1"/>
</dbReference>
<dbReference type="PANTHER" id="PTHR34934:SF1">
    <property type="entry name" value="FLAVIN-DEPENDENT THYMIDYLATE SYNTHASE"/>
    <property type="match status" value="1"/>
</dbReference>
<dbReference type="Pfam" id="PF02511">
    <property type="entry name" value="Thy1"/>
    <property type="match status" value="1"/>
</dbReference>
<dbReference type="SUPFAM" id="SSF69796">
    <property type="entry name" value="Thymidylate synthase-complementing protein Thy1"/>
    <property type="match status" value="1"/>
</dbReference>
<dbReference type="PROSITE" id="PS51331">
    <property type="entry name" value="THYX"/>
    <property type="match status" value="1"/>
</dbReference>
<organism>
    <name type="scientific">Mycobacterium sp. (strain KMS)</name>
    <dbReference type="NCBI Taxonomy" id="189918"/>
    <lineage>
        <taxon>Bacteria</taxon>
        <taxon>Bacillati</taxon>
        <taxon>Actinomycetota</taxon>
        <taxon>Actinomycetes</taxon>
        <taxon>Mycobacteriales</taxon>
        <taxon>Mycobacteriaceae</taxon>
        <taxon>Mycobacterium</taxon>
    </lineage>
</organism>
<accession>A1UEV1</accession>
<name>THYX_MYCSK</name>
<reference key="1">
    <citation type="submission" date="2006-12" db="EMBL/GenBank/DDBJ databases">
        <title>Complete sequence of chromosome of Mycobacterium sp. KMS.</title>
        <authorList>
            <consortium name="US DOE Joint Genome Institute"/>
            <person name="Copeland A."/>
            <person name="Lucas S."/>
            <person name="Lapidus A."/>
            <person name="Barry K."/>
            <person name="Detter J.C."/>
            <person name="Glavina del Rio T."/>
            <person name="Hammon N."/>
            <person name="Israni S."/>
            <person name="Dalin E."/>
            <person name="Tice H."/>
            <person name="Pitluck S."/>
            <person name="Kiss H."/>
            <person name="Brettin T."/>
            <person name="Bruce D."/>
            <person name="Han C."/>
            <person name="Tapia R."/>
            <person name="Gilna P."/>
            <person name="Schmutz J."/>
            <person name="Larimer F."/>
            <person name="Land M."/>
            <person name="Hauser L."/>
            <person name="Kyrpides N."/>
            <person name="Mikhailova N."/>
            <person name="Miller C.D."/>
            <person name="Richardson P."/>
        </authorList>
    </citation>
    <scope>NUCLEOTIDE SEQUENCE [LARGE SCALE GENOMIC DNA]</scope>
    <source>
        <strain>KMS</strain>
    </source>
</reference>
<proteinExistence type="inferred from homology"/>